<feature type="chain" id="PRO_0000157823" description="Putative GTPase PYRAB02490">
    <location>
        <begin position="1"/>
        <end position="324"/>
    </location>
</feature>
<feature type="binding site" evidence="1">
    <location>
        <begin position="52"/>
        <end position="60"/>
    </location>
    <ligand>
        <name>GTP</name>
        <dbReference type="ChEBI" id="CHEBI:37565"/>
    </ligand>
</feature>
<feature type="binding site" evidence="1">
    <location>
        <position position="194"/>
    </location>
    <ligand>
        <name>GTP</name>
        <dbReference type="ChEBI" id="CHEBI:37565"/>
    </ligand>
</feature>
<feature type="binding site" evidence="1">
    <location>
        <begin position="229"/>
        <end position="231"/>
    </location>
    <ligand>
        <name>GTP</name>
        <dbReference type="ChEBI" id="CHEBI:37565"/>
    </ligand>
</feature>
<proteinExistence type="inferred from homology"/>
<accession>Q9V225</accession>
<accession>G8ZG85</accession>
<name>Y249_PYRAB</name>
<keyword id="KW-0067">ATP-binding</keyword>
<keyword id="KW-0143">Chaperone</keyword>
<keyword id="KW-0342">GTP-binding</keyword>
<keyword id="KW-0378">Hydrolase</keyword>
<keyword id="KW-0547">Nucleotide-binding</keyword>
<gene>
    <name type="ordered locus">PYRAB02490</name>
    <name type="ORF">PAB2398</name>
</gene>
<comment type="function">
    <text evidence="1">May have GTPase activity. May also bind and hydrolyze ATP. May function as chaperone (By similarity).</text>
</comment>
<comment type="similarity">
    <text evidence="2">Belongs to the SIMIBI class G3E GTPase family. ArgK/MeaB subfamily.</text>
</comment>
<organism>
    <name type="scientific">Pyrococcus abyssi (strain GE5 / Orsay)</name>
    <dbReference type="NCBI Taxonomy" id="272844"/>
    <lineage>
        <taxon>Archaea</taxon>
        <taxon>Methanobacteriati</taxon>
        <taxon>Methanobacteriota</taxon>
        <taxon>Thermococci</taxon>
        <taxon>Thermococcales</taxon>
        <taxon>Thermococcaceae</taxon>
        <taxon>Pyrococcus</taxon>
    </lineage>
</organism>
<protein>
    <recommendedName>
        <fullName>Putative GTPase PYRAB02490</fullName>
        <ecNumber>3.6.-.-</ecNumber>
    </recommendedName>
</protein>
<dbReference type="EC" id="3.6.-.-"/>
<dbReference type="EMBL" id="AJ248283">
    <property type="protein sequence ID" value="CAB49173.1"/>
    <property type="molecule type" value="Genomic_DNA"/>
</dbReference>
<dbReference type="EMBL" id="HE613800">
    <property type="protein sequence ID" value="CCE69626.1"/>
    <property type="molecule type" value="Genomic_DNA"/>
</dbReference>
<dbReference type="PIR" id="F75215">
    <property type="entry name" value="F75215"/>
</dbReference>
<dbReference type="RefSeq" id="WP_010867373.1">
    <property type="nucleotide sequence ID" value="NC_000868.1"/>
</dbReference>
<dbReference type="SMR" id="Q9V225"/>
<dbReference type="STRING" id="272844.PAB2398"/>
<dbReference type="KEGG" id="pab:PAB2398"/>
<dbReference type="PATRIC" id="fig|272844.11.peg.267"/>
<dbReference type="eggNOG" id="arCOG01226">
    <property type="taxonomic scope" value="Archaea"/>
</dbReference>
<dbReference type="HOGENOM" id="CLU_043725_1_0_2"/>
<dbReference type="OrthoDB" id="21324at2157"/>
<dbReference type="PhylomeDB" id="Q9V225"/>
<dbReference type="Proteomes" id="UP000000810">
    <property type="component" value="Chromosome"/>
</dbReference>
<dbReference type="Proteomes" id="UP000009139">
    <property type="component" value="Chromosome"/>
</dbReference>
<dbReference type="GO" id="GO:0005524">
    <property type="term" value="F:ATP binding"/>
    <property type="evidence" value="ECO:0007669"/>
    <property type="project" value="UniProtKB-KW"/>
</dbReference>
<dbReference type="GO" id="GO:0016887">
    <property type="term" value="F:ATP hydrolysis activity"/>
    <property type="evidence" value="ECO:0007669"/>
    <property type="project" value="InterPro"/>
</dbReference>
<dbReference type="GO" id="GO:0005525">
    <property type="term" value="F:GTP binding"/>
    <property type="evidence" value="ECO:0007669"/>
    <property type="project" value="UniProtKB-KW"/>
</dbReference>
<dbReference type="GO" id="GO:0003924">
    <property type="term" value="F:GTPase activity"/>
    <property type="evidence" value="ECO:0007669"/>
    <property type="project" value="InterPro"/>
</dbReference>
<dbReference type="CDD" id="cd03114">
    <property type="entry name" value="MMAA-like"/>
    <property type="match status" value="1"/>
</dbReference>
<dbReference type="Gene3D" id="1.20.5.170">
    <property type="match status" value="1"/>
</dbReference>
<dbReference type="Gene3D" id="3.40.50.300">
    <property type="entry name" value="P-loop containing nucleotide triphosphate hydrolases"/>
    <property type="match status" value="1"/>
</dbReference>
<dbReference type="InterPro" id="IPR003593">
    <property type="entry name" value="AAA+_ATPase"/>
</dbReference>
<dbReference type="InterPro" id="IPR052040">
    <property type="entry name" value="GTPase/Isobutyryl-CoA_mutase"/>
</dbReference>
<dbReference type="InterPro" id="IPR005129">
    <property type="entry name" value="GTPase_ArgK"/>
</dbReference>
<dbReference type="InterPro" id="IPR027417">
    <property type="entry name" value="P-loop_NTPase"/>
</dbReference>
<dbReference type="NCBIfam" id="TIGR00750">
    <property type="entry name" value="lao"/>
    <property type="match status" value="1"/>
</dbReference>
<dbReference type="PANTHER" id="PTHR43087:SF1">
    <property type="entry name" value="LAO_AO TRANSPORT SYSTEM ATPASE"/>
    <property type="match status" value="1"/>
</dbReference>
<dbReference type="PANTHER" id="PTHR43087">
    <property type="entry name" value="LYSINE/ARGININE/ORNITHINE TRANSPORT SYSTEM KINASE"/>
    <property type="match status" value="1"/>
</dbReference>
<dbReference type="Pfam" id="PF03308">
    <property type="entry name" value="MeaB"/>
    <property type="match status" value="1"/>
</dbReference>
<dbReference type="SMART" id="SM00382">
    <property type="entry name" value="AAA"/>
    <property type="match status" value="1"/>
</dbReference>
<dbReference type="SUPFAM" id="SSF52540">
    <property type="entry name" value="P-loop containing nucleoside triphosphate hydrolases"/>
    <property type="match status" value="1"/>
</dbReference>
<reference key="1">
    <citation type="journal article" date="2003" name="Mol. Microbiol.">
        <title>An integrated analysis of the genome of the hyperthermophilic archaeon Pyrococcus abyssi.</title>
        <authorList>
            <person name="Cohen G.N."/>
            <person name="Barbe V."/>
            <person name="Flament D."/>
            <person name="Galperin M."/>
            <person name="Heilig R."/>
            <person name="Lecompte O."/>
            <person name="Poch O."/>
            <person name="Prieur D."/>
            <person name="Querellou J."/>
            <person name="Ripp R."/>
            <person name="Thierry J.-C."/>
            <person name="Van der Oost J."/>
            <person name="Weissenbach J."/>
            <person name="Zivanovic Y."/>
            <person name="Forterre P."/>
        </authorList>
    </citation>
    <scope>NUCLEOTIDE SEQUENCE [LARGE SCALE GENOMIC DNA]</scope>
    <source>
        <strain>GE5 / Orsay</strain>
    </source>
</reference>
<reference key="2">
    <citation type="journal article" date="2012" name="Curr. Microbiol.">
        <title>Re-annotation of two hyperthermophilic archaea Pyrococcus abyssi GE5 and Pyrococcus furiosus DSM 3638.</title>
        <authorList>
            <person name="Gao J."/>
            <person name="Wang J."/>
        </authorList>
    </citation>
    <scope>GENOME REANNOTATION</scope>
    <source>
        <strain>GE5 / Orsay</strain>
    </source>
</reference>
<evidence type="ECO:0000250" key="1"/>
<evidence type="ECO:0000305" key="2"/>
<sequence>MIDELIERMKKGDRRATARLITLVENDEEKAREIIRKIYPLTGNAYIVGITGPPGAGKSTLLDKLIKEARKEGLIVGVIAIDPTSPFTGGALLGDRIRMQRHSTDPGVFIRSMATRGSLGGLAKATNDAIKVLDAYGCDVIFVETVGVGQVEVDIVKTADTVVLVTVPGLGDDVQTIKAGLMEIADIFVINKADKEGADATYFELNLALDLESDKWRELGWRPPVVETVATMNKGIKELWDKIKEHREFLERSGRLKEKRRKRIEEEIKTIVSGIIAGKVEASIKRGEFEEIIRRVSQKDIDPYSAADMILKEIIGGGLSVQEN</sequence>